<organism>
    <name type="scientific">Streptococcus agalactiae serotype Ia (strain ATCC 27591 / A909 / CDC SS700)</name>
    <dbReference type="NCBI Taxonomy" id="205921"/>
    <lineage>
        <taxon>Bacteria</taxon>
        <taxon>Bacillati</taxon>
        <taxon>Bacillota</taxon>
        <taxon>Bacilli</taxon>
        <taxon>Lactobacillales</taxon>
        <taxon>Streptococcaceae</taxon>
        <taxon>Streptococcus</taxon>
    </lineage>
</organism>
<accession>Q3JZI2</accession>
<proteinExistence type="inferred from homology"/>
<dbReference type="EMBL" id="CP000114">
    <property type="protein sequence ID" value="ABA44459.1"/>
    <property type="molecule type" value="Genomic_DNA"/>
</dbReference>
<dbReference type="RefSeq" id="WP_000068665.1">
    <property type="nucleotide sequence ID" value="NC_007432.1"/>
</dbReference>
<dbReference type="SMR" id="Q3JZI2"/>
<dbReference type="GeneID" id="98393981"/>
<dbReference type="KEGG" id="sak:SAK_1720"/>
<dbReference type="HOGENOM" id="CLU_148710_2_2_9"/>
<dbReference type="GO" id="GO:0022627">
    <property type="term" value="C:cytosolic small ribosomal subunit"/>
    <property type="evidence" value="ECO:0007669"/>
    <property type="project" value="TreeGrafter"/>
</dbReference>
<dbReference type="GO" id="GO:0070181">
    <property type="term" value="F:small ribosomal subunit rRNA binding"/>
    <property type="evidence" value="ECO:0007669"/>
    <property type="project" value="TreeGrafter"/>
</dbReference>
<dbReference type="GO" id="GO:0003735">
    <property type="term" value="F:structural constituent of ribosome"/>
    <property type="evidence" value="ECO:0007669"/>
    <property type="project" value="InterPro"/>
</dbReference>
<dbReference type="GO" id="GO:0006412">
    <property type="term" value="P:translation"/>
    <property type="evidence" value="ECO:0007669"/>
    <property type="project" value="UniProtKB-UniRule"/>
</dbReference>
<dbReference type="FunFam" id="4.10.640.10:FF:000003">
    <property type="entry name" value="30S ribosomal protein S18"/>
    <property type="match status" value="1"/>
</dbReference>
<dbReference type="Gene3D" id="4.10.640.10">
    <property type="entry name" value="Ribosomal protein S18"/>
    <property type="match status" value="1"/>
</dbReference>
<dbReference type="HAMAP" id="MF_00270">
    <property type="entry name" value="Ribosomal_bS18"/>
    <property type="match status" value="1"/>
</dbReference>
<dbReference type="InterPro" id="IPR001648">
    <property type="entry name" value="Ribosomal_bS18"/>
</dbReference>
<dbReference type="InterPro" id="IPR018275">
    <property type="entry name" value="Ribosomal_bS18_CS"/>
</dbReference>
<dbReference type="InterPro" id="IPR036870">
    <property type="entry name" value="Ribosomal_bS18_sf"/>
</dbReference>
<dbReference type="NCBIfam" id="TIGR00165">
    <property type="entry name" value="S18"/>
    <property type="match status" value="1"/>
</dbReference>
<dbReference type="PANTHER" id="PTHR13479">
    <property type="entry name" value="30S RIBOSOMAL PROTEIN S18"/>
    <property type="match status" value="1"/>
</dbReference>
<dbReference type="PANTHER" id="PTHR13479:SF40">
    <property type="entry name" value="SMALL RIBOSOMAL SUBUNIT PROTEIN BS18M"/>
    <property type="match status" value="1"/>
</dbReference>
<dbReference type="Pfam" id="PF01084">
    <property type="entry name" value="Ribosomal_S18"/>
    <property type="match status" value="1"/>
</dbReference>
<dbReference type="PRINTS" id="PR00974">
    <property type="entry name" value="RIBOSOMALS18"/>
</dbReference>
<dbReference type="SUPFAM" id="SSF46911">
    <property type="entry name" value="Ribosomal protein S18"/>
    <property type="match status" value="1"/>
</dbReference>
<dbReference type="PROSITE" id="PS00057">
    <property type="entry name" value="RIBOSOMAL_S18"/>
    <property type="match status" value="1"/>
</dbReference>
<gene>
    <name evidence="1" type="primary">rpsR</name>
    <name type="ordered locus">SAK_1720</name>
</gene>
<reference key="1">
    <citation type="journal article" date="2005" name="Proc. Natl. Acad. Sci. U.S.A.">
        <title>Genome analysis of multiple pathogenic isolates of Streptococcus agalactiae: implications for the microbial 'pan-genome'.</title>
        <authorList>
            <person name="Tettelin H."/>
            <person name="Masignani V."/>
            <person name="Cieslewicz M.J."/>
            <person name="Donati C."/>
            <person name="Medini D."/>
            <person name="Ward N.L."/>
            <person name="Angiuoli S.V."/>
            <person name="Crabtree J."/>
            <person name="Jones A.L."/>
            <person name="Durkin A.S."/>
            <person name="DeBoy R.T."/>
            <person name="Davidsen T.M."/>
            <person name="Mora M."/>
            <person name="Scarselli M."/>
            <person name="Margarit y Ros I."/>
            <person name="Peterson J.D."/>
            <person name="Hauser C.R."/>
            <person name="Sundaram J.P."/>
            <person name="Nelson W.C."/>
            <person name="Madupu R."/>
            <person name="Brinkac L.M."/>
            <person name="Dodson R.J."/>
            <person name="Rosovitz M.J."/>
            <person name="Sullivan S.A."/>
            <person name="Daugherty S.C."/>
            <person name="Haft D.H."/>
            <person name="Selengut J."/>
            <person name="Gwinn M.L."/>
            <person name="Zhou L."/>
            <person name="Zafar N."/>
            <person name="Khouri H."/>
            <person name="Radune D."/>
            <person name="Dimitrov G."/>
            <person name="Watkins K."/>
            <person name="O'Connor K.J."/>
            <person name="Smith S."/>
            <person name="Utterback T.R."/>
            <person name="White O."/>
            <person name="Rubens C.E."/>
            <person name="Grandi G."/>
            <person name="Madoff L.C."/>
            <person name="Kasper D.L."/>
            <person name="Telford J.L."/>
            <person name="Wessels M.R."/>
            <person name="Rappuoli R."/>
            <person name="Fraser C.M."/>
        </authorList>
    </citation>
    <scope>NUCLEOTIDE SEQUENCE [LARGE SCALE GENOMIC DNA]</scope>
    <source>
        <strain>ATCC 27591 / A909 / CDC SS700</strain>
    </source>
</reference>
<feature type="chain" id="PRO_1000003624" description="Small ribosomal subunit protein bS18">
    <location>
        <begin position="1"/>
        <end position="79"/>
    </location>
</feature>
<protein>
    <recommendedName>
        <fullName evidence="1">Small ribosomal subunit protein bS18</fullName>
    </recommendedName>
    <alternativeName>
        <fullName evidence="2">30S ribosomal protein S18</fullName>
    </alternativeName>
</protein>
<sequence length="79" mass="9220">MAQQRRGGFKRRKKVDYIAANKIEYVDYKDTELLSRFVSERGKILPRRVTGTSAKNQRKVTTAIKRARVMALMPYVNED</sequence>
<comment type="function">
    <text evidence="1">Binds as a heterodimer with protein bS6 to the central domain of the 16S rRNA, where it helps stabilize the platform of the 30S subunit.</text>
</comment>
<comment type="subunit">
    <text evidence="1">Part of the 30S ribosomal subunit. Forms a tight heterodimer with protein bS6.</text>
</comment>
<comment type="similarity">
    <text evidence="1">Belongs to the bacterial ribosomal protein bS18 family.</text>
</comment>
<keyword id="KW-0687">Ribonucleoprotein</keyword>
<keyword id="KW-0689">Ribosomal protein</keyword>
<keyword id="KW-0694">RNA-binding</keyword>
<keyword id="KW-0699">rRNA-binding</keyword>
<evidence type="ECO:0000255" key="1">
    <source>
        <dbReference type="HAMAP-Rule" id="MF_00270"/>
    </source>
</evidence>
<evidence type="ECO:0000305" key="2"/>
<name>RS18_STRA1</name>